<dbReference type="EC" id="4.1.2.4" evidence="1"/>
<dbReference type="EMBL" id="BX936398">
    <property type="protein sequence ID" value="CAH19821.1"/>
    <property type="molecule type" value="Genomic_DNA"/>
</dbReference>
<dbReference type="SMR" id="Q66EW0"/>
<dbReference type="KEGG" id="ypo:BZ17_1978"/>
<dbReference type="KEGG" id="yps:YPTB0581"/>
<dbReference type="PATRIC" id="fig|273123.14.peg.2104"/>
<dbReference type="UniPathway" id="UPA00002">
    <property type="reaction ID" value="UER00468"/>
</dbReference>
<dbReference type="Proteomes" id="UP000001011">
    <property type="component" value="Chromosome"/>
</dbReference>
<dbReference type="GO" id="GO:0005737">
    <property type="term" value="C:cytoplasm"/>
    <property type="evidence" value="ECO:0007669"/>
    <property type="project" value="UniProtKB-SubCell"/>
</dbReference>
<dbReference type="GO" id="GO:0004139">
    <property type="term" value="F:deoxyribose-phosphate aldolase activity"/>
    <property type="evidence" value="ECO:0007669"/>
    <property type="project" value="UniProtKB-UniRule"/>
</dbReference>
<dbReference type="GO" id="GO:0006018">
    <property type="term" value="P:2-deoxyribose 1-phosphate catabolic process"/>
    <property type="evidence" value="ECO:0007669"/>
    <property type="project" value="UniProtKB-UniRule"/>
</dbReference>
<dbReference type="GO" id="GO:0016052">
    <property type="term" value="P:carbohydrate catabolic process"/>
    <property type="evidence" value="ECO:0007669"/>
    <property type="project" value="TreeGrafter"/>
</dbReference>
<dbReference type="GO" id="GO:0009264">
    <property type="term" value="P:deoxyribonucleotide catabolic process"/>
    <property type="evidence" value="ECO:0007669"/>
    <property type="project" value="InterPro"/>
</dbReference>
<dbReference type="CDD" id="cd00959">
    <property type="entry name" value="DeoC"/>
    <property type="match status" value="1"/>
</dbReference>
<dbReference type="FunFam" id="3.20.20.70:FF:000034">
    <property type="entry name" value="Deoxyribose-phosphate aldolase"/>
    <property type="match status" value="1"/>
</dbReference>
<dbReference type="Gene3D" id="3.20.20.70">
    <property type="entry name" value="Aldolase class I"/>
    <property type="match status" value="1"/>
</dbReference>
<dbReference type="HAMAP" id="MF_00592">
    <property type="entry name" value="DeoC_type2"/>
    <property type="match status" value="1"/>
</dbReference>
<dbReference type="InterPro" id="IPR013785">
    <property type="entry name" value="Aldolase_TIM"/>
</dbReference>
<dbReference type="InterPro" id="IPR011343">
    <property type="entry name" value="DeoC"/>
</dbReference>
<dbReference type="InterPro" id="IPR002915">
    <property type="entry name" value="DeoC/FbaB/LacD_aldolase"/>
</dbReference>
<dbReference type="InterPro" id="IPR023649">
    <property type="entry name" value="DeoC_typeII"/>
</dbReference>
<dbReference type="NCBIfam" id="TIGR00126">
    <property type="entry name" value="deoC"/>
    <property type="match status" value="1"/>
</dbReference>
<dbReference type="PANTHER" id="PTHR10889">
    <property type="entry name" value="DEOXYRIBOSE-PHOSPHATE ALDOLASE"/>
    <property type="match status" value="1"/>
</dbReference>
<dbReference type="PANTHER" id="PTHR10889:SF3">
    <property type="entry name" value="DEOXYRIBOSE-PHOSPHATE ALDOLASE"/>
    <property type="match status" value="1"/>
</dbReference>
<dbReference type="Pfam" id="PF01791">
    <property type="entry name" value="DeoC"/>
    <property type="match status" value="1"/>
</dbReference>
<dbReference type="PIRSF" id="PIRSF001357">
    <property type="entry name" value="DeoC"/>
    <property type="match status" value="1"/>
</dbReference>
<dbReference type="SMART" id="SM01133">
    <property type="entry name" value="DeoC"/>
    <property type="match status" value="1"/>
</dbReference>
<dbReference type="SUPFAM" id="SSF51569">
    <property type="entry name" value="Aldolase"/>
    <property type="match status" value="1"/>
</dbReference>
<sequence length="265" mass="28274">MTDLTACAHLNDYAKRALSLMDLTTLNDDDTDEKVIALCHQAKSPAGNTAAICIYPRFIPVARKALREQGTPEIRIATVTNFPHGNDDVAIALAETRAAIAYGADEVDVVFPYRALMAGNDKIGFELVKTCKEACAAANVLLKVIIETGELKQAHLIRQASEIAIKAGADFIKTSTGKVPVNATLESADIMIRTIRELGVGETVGFKPAGGVRTAEDAAQFLQLADQLMGEGWADARHFRFGASSLLASLLTTLGHQSNANSSGY</sequence>
<organism>
    <name type="scientific">Yersinia pseudotuberculosis serotype I (strain IP32953)</name>
    <dbReference type="NCBI Taxonomy" id="273123"/>
    <lineage>
        <taxon>Bacteria</taxon>
        <taxon>Pseudomonadati</taxon>
        <taxon>Pseudomonadota</taxon>
        <taxon>Gammaproteobacteria</taxon>
        <taxon>Enterobacterales</taxon>
        <taxon>Yersiniaceae</taxon>
        <taxon>Yersinia</taxon>
    </lineage>
</organism>
<keyword id="KW-0963">Cytoplasm</keyword>
<keyword id="KW-0456">Lyase</keyword>
<keyword id="KW-0704">Schiff base</keyword>
<accession>Q66EW0</accession>
<proteinExistence type="inferred from homology"/>
<name>DEOC2_YERPS</name>
<gene>
    <name evidence="1" type="primary">deoC2</name>
    <name type="ordered locus">YPTB0581</name>
</gene>
<evidence type="ECO:0000255" key="1">
    <source>
        <dbReference type="HAMAP-Rule" id="MF_00592"/>
    </source>
</evidence>
<reference key="1">
    <citation type="journal article" date="2004" name="Proc. Natl. Acad. Sci. U.S.A.">
        <title>Insights into the evolution of Yersinia pestis through whole-genome comparison with Yersinia pseudotuberculosis.</title>
        <authorList>
            <person name="Chain P.S.G."/>
            <person name="Carniel E."/>
            <person name="Larimer F.W."/>
            <person name="Lamerdin J."/>
            <person name="Stoutland P.O."/>
            <person name="Regala W.M."/>
            <person name="Georgescu A.M."/>
            <person name="Vergez L.M."/>
            <person name="Land M.L."/>
            <person name="Motin V.L."/>
            <person name="Brubaker R.R."/>
            <person name="Fowler J."/>
            <person name="Hinnebusch J."/>
            <person name="Marceau M."/>
            <person name="Medigue C."/>
            <person name="Simonet M."/>
            <person name="Chenal-Francisque V."/>
            <person name="Souza B."/>
            <person name="Dacheux D."/>
            <person name="Elliott J.M."/>
            <person name="Derbise A."/>
            <person name="Hauser L.J."/>
            <person name="Garcia E."/>
        </authorList>
    </citation>
    <scope>NUCLEOTIDE SEQUENCE [LARGE SCALE GENOMIC DNA]</scope>
    <source>
        <strain>IP32953</strain>
    </source>
</reference>
<feature type="chain" id="PRO_0000231576" description="Deoxyribose-phosphate aldolase 2">
    <location>
        <begin position="1"/>
        <end position="265"/>
    </location>
</feature>
<feature type="active site" description="Proton donor/acceptor" evidence="1">
    <location>
        <position position="108"/>
    </location>
</feature>
<feature type="active site" description="Schiff-base intermediate with acetaldehyde" evidence="1">
    <location>
        <position position="173"/>
    </location>
</feature>
<feature type="active site" description="Proton donor/acceptor" evidence="1">
    <location>
        <position position="207"/>
    </location>
</feature>
<protein>
    <recommendedName>
        <fullName evidence="1">Deoxyribose-phosphate aldolase 2</fullName>
        <shortName evidence="1">DERA 2</shortName>
        <ecNumber evidence="1">4.1.2.4</ecNumber>
    </recommendedName>
    <alternativeName>
        <fullName evidence="1">2-deoxy-D-ribose 5-phosphate aldolase 2</fullName>
    </alternativeName>
    <alternativeName>
        <fullName evidence="1">Phosphodeoxyriboaldolase 2</fullName>
        <shortName evidence="1">Deoxyriboaldolase 2</shortName>
    </alternativeName>
</protein>
<comment type="function">
    <text evidence="1">Catalyzes a reversible aldol reaction between acetaldehyde and D-glyceraldehyde 3-phosphate to generate 2-deoxy-D-ribose 5-phosphate.</text>
</comment>
<comment type="catalytic activity">
    <reaction evidence="1">
        <text>2-deoxy-D-ribose 5-phosphate = D-glyceraldehyde 3-phosphate + acetaldehyde</text>
        <dbReference type="Rhea" id="RHEA:12821"/>
        <dbReference type="ChEBI" id="CHEBI:15343"/>
        <dbReference type="ChEBI" id="CHEBI:59776"/>
        <dbReference type="ChEBI" id="CHEBI:62877"/>
        <dbReference type="EC" id="4.1.2.4"/>
    </reaction>
</comment>
<comment type="pathway">
    <text evidence="1">Carbohydrate degradation; 2-deoxy-D-ribose 1-phosphate degradation; D-glyceraldehyde 3-phosphate and acetaldehyde from 2-deoxy-alpha-D-ribose 1-phosphate: step 2/2.</text>
</comment>
<comment type="subcellular location">
    <subcellularLocation>
        <location evidence="1">Cytoplasm</location>
    </subcellularLocation>
</comment>
<comment type="similarity">
    <text evidence="1">Belongs to the DeoC/FbaB aldolase family. DeoC type 2 subfamily.</text>
</comment>